<sequence>MSFRLSGGSRRICSRTGSGRLSGGGTGFVAGNVCVGSGARSSFSCTLEGISSGGSFCNSGGGLGSGACAGFLGNEHSLLSGNEKVTMQNLNDRLASYLDHVHALEEANADLEQKIKGWYEKCEPGSSREHDHDYSRYFSVIEDLKRQIISATICNASIVLQNDNARLTADDFRLKYENELALHHSVEADTSGLRRVLDELTLCTTDLEIQCETLSEELTYLKKSHEEEMEVLQYTAGGNVNVEMNATPGVDLTVLLNNMRAEYEDLAEQNRKDAEAWFNERSATLQQQISDHEGAATAARNELTELKRNLQTLEIELQSLMAVKHSYECSLAETEGNYCNQLQQIQDQIGVMEEQLQQIRTETEGQKLEYEQLLDVKIFLEKEIDIYCNLLDGEERKSKSTCYKSKGYRPVNSGNQAKDSTEETIVKTVVEELDQIGNLLSLRVHSVEEKSSKISNITVEQRVPSKAP</sequence>
<organism>
    <name type="scientific">Homo sapiens</name>
    <name type="common">Human</name>
    <dbReference type="NCBI Taxonomy" id="9606"/>
    <lineage>
        <taxon>Eukaryota</taxon>
        <taxon>Metazoa</taxon>
        <taxon>Chordata</taxon>
        <taxon>Craniata</taxon>
        <taxon>Vertebrata</taxon>
        <taxon>Euteleostomi</taxon>
        <taxon>Mammalia</taxon>
        <taxon>Eutheria</taxon>
        <taxon>Euarchontoglires</taxon>
        <taxon>Primates</taxon>
        <taxon>Haplorrhini</taxon>
        <taxon>Catarrhini</taxon>
        <taxon>Hominidae</taxon>
        <taxon>Homo</taxon>
    </lineage>
</organism>
<keyword id="KW-0175">Coiled coil</keyword>
<keyword id="KW-0403">Intermediate filament</keyword>
<keyword id="KW-0416">Keratin</keyword>
<keyword id="KW-1267">Proteomics identification</keyword>
<keyword id="KW-1185">Reference proteome</keyword>
<accession>Q7Z3Y9</accession>
<accession>A2RUL2</accession>
<accession>B2RNH8</accession>
<proteinExistence type="evidence at protein level"/>
<evidence type="ECO:0000255" key="1"/>
<evidence type="ECO:0000255" key="2">
    <source>
        <dbReference type="PROSITE-ProRule" id="PRU01188"/>
    </source>
</evidence>
<evidence type="ECO:0000269" key="3">
    <source>
    </source>
</evidence>
<evidence type="ECO:0000269" key="4">
    <source>
    </source>
</evidence>
<evidence type="ECO:0000305" key="5"/>
<evidence type="ECO:0000312" key="6">
    <source>
        <dbReference type="EMBL" id="AAI32952.1"/>
    </source>
</evidence>
<evidence type="ECO:0000312" key="7">
    <source>
        <dbReference type="EMBL" id="CAD91905.1"/>
    </source>
</evidence>
<evidence type="ECO:0000312" key="8">
    <source>
        <dbReference type="EMBL" id="EAW60677.1"/>
    </source>
</evidence>
<reference evidence="5 7" key="1">
    <citation type="journal article" date="2004" name="Differentiation">
        <title>The human type I keratin gene family: characterization of new hair follicle specific members and evaluation of the chromosome 17q21.2 gene domain.</title>
        <authorList>
            <person name="Rogers M.A."/>
            <person name="Winter H."/>
            <person name="Langbein L."/>
            <person name="Bleiler R."/>
            <person name="Schweizer J."/>
        </authorList>
    </citation>
    <scope>NUCLEOTIDE SEQUENCE [MRNA]</scope>
    <scope>TISSUE SPECIFICITY</scope>
    <scope>VARIANT ARG-118</scope>
    <source>
        <tissue evidence="7">Scalp</tissue>
    </source>
</reference>
<reference evidence="8" key="2">
    <citation type="submission" date="2005-07" db="EMBL/GenBank/DDBJ databases">
        <authorList>
            <person name="Mural R.J."/>
            <person name="Istrail S."/>
            <person name="Sutton G.G."/>
            <person name="Florea L."/>
            <person name="Halpern A.L."/>
            <person name="Mobarry C.M."/>
            <person name="Lippert R."/>
            <person name="Walenz B."/>
            <person name="Shatkay H."/>
            <person name="Dew I."/>
            <person name="Miller J.R."/>
            <person name="Flanigan M.J."/>
            <person name="Edwards N.J."/>
            <person name="Bolanos R."/>
            <person name="Fasulo D."/>
            <person name="Halldorsson B.V."/>
            <person name="Hannenhalli S."/>
            <person name="Turner R."/>
            <person name="Yooseph S."/>
            <person name="Lu F."/>
            <person name="Nusskern D.R."/>
            <person name="Shue B.C."/>
            <person name="Zheng X.H."/>
            <person name="Zhong F."/>
            <person name="Delcher A.L."/>
            <person name="Huson D.H."/>
            <person name="Kravitz S.A."/>
            <person name="Mouchard L."/>
            <person name="Reinert K."/>
            <person name="Remington K.A."/>
            <person name="Clark A.G."/>
            <person name="Waterman M.S."/>
            <person name="Eichler E.E."/>
            <person name="Adams M.D."/>
            <person name="Hunkapiller M.W."/>
            <person name="Myers E.W."/>
            <person name="Venter J.C."/>
        </authorList>
    </citation>
    <scope>NUCLEOTIDE SEQUENCE [LARGE SCALE GENOMIC DNA]</scope>
</reference>
<reference evidence="6" key="3">
    <citation type="journal article" date="2004" name="Genome Res.">
        <title>The status, quality, and expansion of the NIH full-length cDNA project: the Mammalian Gene Collection (MGC).</title>
        <authorList>
            <consortium name="The MGC Project Team"/>
        </authorList>
    </citation>
    <scope>NUCLEOTIDE SEQUENCE [LARGE SCALE MRNA]</scope>
</reference>
<reference evidence="5" key="4">
    <citation type="journal article" date="2006" name="J. Invest. Dermatol.">
        <title>K25 (K25irs1), K26 (K25irs2), K27 (K25irs3), and K28 (K25irs4) represent the type I inner root sheath keratins of the human hair follicle.</title>
        <authorList>
            <person name="Langbein L."/>
            <person name="Rogers M.A."/>
            <person name="Praetzel-Wunder S."/>
            <person name="Helmke B."/>
            <person name="Schirmacher P."/>
            <person name="Schweizer J."/>
        </authorList>
    </citation>
    <scope>TISSUE SPECIFICITY</scope>
</reference>
<feature type="chain" id="PRO_0000312697" description="Keratin, type I cytoskeletal 26">
    <location>
        <begin position="1"/>
        <end position="468"/>
    </location>
</feature>
<feature type="domain" description="IF rod" evidence="2">
    <location>
        <begin position="83"/>
        <end position="398"/>
    </location>
</feature>
<feature type="region of interest" description="Head" evidence="1">
    <location>
        <begin position="1"/>
        <end position="82"/>
    </location>
</feature>
<feature type="region of interest" description="Coil 1A" evidence="1">
    <location>
        <begin position="83"/>
        <end position="118"/>
    </location>
</feature>
<feature type="region of interest" description="Linker 1" evidence="1">
    <location>
        <begin position="119"/>
        <end position="140"/>
    </location>
</feature>
<feature type="region of interest" description="Coil 1B" evidence="1">
    <location>
        <begin position="141"/>
        <end position="232"/>
    </location>
</feature>
<feature type="region of interest" description="Linker 12" evidence="1">
    <location>
        <begin position="233"/>
        <end position="255"/>
    </location>
</feature>
<feature type="region of interest" description="Coil 2" evidence="1">
    <location>
        <begin position="256"/>
        <end position="394"/>
    </location>
</feature>
<feature type="region of interest" description="Tail" evidence="1">
    <location>
        <begin position="395"/>
        <end position="465"/>
    </location>
</feature>
<feature type="sequence variant" id="VAR_056006" description="In dbSNP:rs9898164." evidence="3">
    <original>W</original>
    <variation>R</variation>
    <location>
        <position position="118"/>
    </location>
</feature>
<feature type="sequence conflict" description="In Ref. 1; CAD91905." evidence="5" ref="1">
    <original>I</original>
    <variation>T</variation>
    <location>
        <position position="149"/>
    </location>
</feature>
<protein>
    <recommendedName>
        <fullName>Keratin, type I cytoskeletal 26</fullName>
    </recommendedName>
    <alternativeName>
        <fullName>Cytokeratin-26</fullName>
        <shortName>CK-26</shortName>
    </alternativeName>
    <alternativeName>
        <fullName>Keratin-25B</fullName>
        <shortName>K25B</shortName>
    </alternativeName>
    <alternativeName>
        <fullName>Keratin-26</fullName>
        <shortName>K26</shortName>
    </alternativeName>
    <alternativeName>
        <fullName>Type I inner root sheath-specific keratin-K25irs2</fullName>
    </alternativeName>
</protein>
<comment type="subunit">
    <text evidence="5">Heterotetramer of two type I and two type II keratins.</text>
</comment>
<comment type="interaction">
    <interactant intactId="EBI-12084444">
        <id>Q7Z3Y9</id>
    </interactant>
    <interactant intactId="EBI-465872">
        <id>Q6QNY1</id>
        <label>BLOC1S2</label>
    </interactant>
    <organismsDiffer>false</organismsDiffer>
    <experiments>3</experiments>
</comment>
<comment type="interaction">
    <interactant intactId="EBI-12084444">
        <id>Q7Z3Y9</id>
    </interactant>
    <interactant intactId="EBI-10749669">
        <id>Q8IYE0</id>
        <label>CCDC146</label>
    </interactant>
    <organismsDiffer>false</organismsDiffer>
    <experiments>3</experiments>
</comment>
<comment type="interaction">
    <interactant intactId="EBI-12084444">
        <id>Q7Z3Y9</id>
    </interactant>
    <interactant intactId="EBI-12845222">
        <id>Q9NVL1-2</id>
        <label>FAM86C1P</label>
    </interactant>
    <organismsDiffer>false</organismsDiffer>
    <experiments>3</experiments>
</comment>
<comment type="interaction">
    <interactant intactId="EBI-12084444">
        <id>Q7Z3Y9</id>
    </interactant>
    <interactant intactId="EBI-740220">
        <id>O14964</id>
        <label>HGS</label>
    </interactant>
    <organismsDiffer>false</organismsDiffer>
    <experiments>5</experiments>
</comment>
<comment type="interaction">
    <interactant intactId="EBI-12084444">
        <id>Q7Z3Y9</id>
    </interactant>
    <interactant intactId="EBI-14069005">
        <id>Q9BVG8-5</id>
        <label>KIFC3</label>
    </interactant>
    <organismsDiffer>false</organismsDiffer>
    <experiments>3</experiments>
</comment>
<comment type="interaction">
    <interactant intactId="EBI-12084444">
        <id>Q7Z3Y9</id>
    </interactant>
    <interactant intactId="EBI-298429">
        <id>P04264</id>
        <label>KRT1</label>
    </interactant>
    <organismsDiffer>false</organismsDiffer>
    <experiments>3</experiments>
</comment>
<comment type="interaction">
    <interactant intactId="EBI-12084444">
        <id>Q7Z3Y9</id>
    </interactant>
    <interactant intactId="EBI-2430095">
        <id>P12035</id>
        <label>KRT3</label>
    </interactant>
    <organismsDiffer>false</organismsDiffer>
    <experiments>3</experiments>
</comment>
<comment type="interaction">
    <interactant intactId="EBI-12084444">
        <id>Q7Z3Y9</id>
    </interactant>
    <interactant intactId="EBI-702198">
        <id>P02538</id>
        <label>KRT6A</label>
    </interactant>
    <organismsDiffer>false</organismsDiffer>
    <experiments>3</experiments>
</comment>
<comment type="interaction">
    <interactant intactId="EBI-12084444">
        <id>Q7Z3Y9</id>
    </interactant>
    <interactant intactId="EBI-2564105">
        <id>P48668</id>
        <label>KRT6C</label>
    </interactant>
    <organismsDiffer>false</organismsDiffer>
    <experiments>5</experiments>
</comment>
<comment type="interaction">
    <interactant intactId="EBI-12084444">
        <id>Q7Z3Y9</id>
    </interactant>
    <interactant intactId="EBI-2952676">
        <id>Q3SY84</id>
        <label>KRT71</label>
    </interactant>
    <organismsDiffer>false</organismsDiffer>
    <experiments>3</experiments>
</comment>
<comment type="interaction">
    <interactant intactId="EBI-12084444">
        <id>Q7Z3Y9</id>
    </interactant>
    <interactant intactId="EBI-968660">
        <id>Q7RTS7</id>
        <label>KRT74</label>
    </interactant>
    <organismsDiffer>false</organismsDiffer>
    <experiments>3</experiments>
</comment>
<comment type="interaction">
    <interactant intactId="EBI-12084444">
        <id>Q7Z3Y9</id>
    </interactant>
    <interactant intactId="EBI-2949715">
        <id>O95678</id>
        <label>KRT75</label>
    </interactant>
    <organismsDiffer>false</organismsDiffer>
    <experiments>3</experiments>
</comment>
<comment type="interaction">
    <interactant intactId="EBI-12084444">
        <id>Q7Z3Y9</id>
    </interactant>
    <interactant intactId="EBI-739648">
        <id>Q14533</id>
        <label>KRT81</label>
    </interactant>
    <organismsDiffer>false</organismsDiffer>
    <experiments>3</experiments>
</comment>
<comment type="interaction">
    <interactant intactId="EBI-12084444">
        <id>Q7Z3Y9</id>
    </interactant>
    <interactant intactId="EBI-1049371">
        <id>P78386</id>
        <label>KRT85</label>
    </interactant>
    <organismsDiffer>false</organismsDiffer>
    <experiments>3</experiments>
</comment>
<comment type="interaction">
    <interactant intactId="EBI-12084444">
        <id>Q7Z3Y9</id>
    </interactant>
    <interactant intactId="EBI-11987923">
        <id>P59942</id>
        <label>MCCD1</label>
    </interactant>
    <organismsDiffer>false</organismsDiffer>
    <experiments>3</experiments>
</comment>
<comment type="interaction">
    <interactant intactId="EBI-12084444">
        <id>Q7Z3Y9</id>
    </interactant>
    <interactant intactId="EBI-17438674">
        <id>P41440-3</id>
        <label>SLC19A1</label>
    </interactant>
    <organismsDiffer>false</organismsDiffer>
    <experiments>3</experiments>
</comment>
<comment type="interaction">
    <interactant intactId="EBI-12084444">
        <id>Q7Z3Y9</id>
    </interactant>
    <interactant intactId="EBI-296723">
        <id>O95295</id>
        <label>SNAPIN</label>
    </interactant>
    <organismsDiffer>false</organismsDiffer>
    <experiments>3</experiments>
</comment>
<comment type="interaction">
    <interactant intactId="EBI-12084444">
        <id>Q7Z3Y9</id>
    </interactant>
    <interactant intactId="EBI-3921347">
        <id>P51687</id>
        <label>SUOX</label>
    </interactant>
    <organismsDiffer>false</organismsDiffer>
    <experiments>3</experiments>
</comment>
<comment type="interaction">
    <interactant intactId="EBI-12084444">
        <id>Q7Z3Y9</id>
    </interactant>
    <interactant intactId="EBI-11614122">
        <id>Q9UM00-1</id>
        <label>TMCO1</label>
    </interactant>
    <organismsDiffer>false</organismsDiffer>
    <experiments>3</experiments>
</comment>
<comment type="interaction">
    <interactant intactId="EBI-12084444">
        <id>Q7Z3Y9</id>
    </interactant>
    <interactant intactId="EBI-492476">
        <id>Q96RU7</id>
        <label>TRIB3</label>
    </interactant>
    <organismsDiffer>false</organismsDiffer>
    <experiments>3</experiments>
</comment>
<comment type="interaction">
    <interactant intactId="EBI-12084444">
        <id>Q7Z3Y9</id>
    </interactant>
    <interactant intactId="EBI-6116822">
        <id>Q8N3L3</id>
        <label>TXLNB</label>
    </interactant>
    <organismsDiffer>false</organismsDiffer>
    <experiments>3</experiments>
</comment>
<comment type="interaction">
    <interactant intactId="EBI-12084444">
        <id>Q7Z3Y9</id>
    </interactant>
    <interactant intactId="EBI-739895">
        <id>Q8N6Y0</id>
        <label>USHBP1</label>
    </interactant>
    <organismsDiffer>false</organismsDiffer>
    <experiments>3</experiments>
</comment>
<comment type="tissue specificity">
    <text evidence="3 4">Strongly expressed in skin and scalp, and weak expression observed in thymus and tongue. In the hair follicle, expression is restricted to the mid- to upper inner root sheath cuticle, being present slightly above the apex of the dermal papilla (at protein level).</text>
</comment>
<comment type="miscellaneous">
    <text evidence="5">There are two types of cytoskeletal and microfibrillar keratin: I (acidic; 40-55 kDa) and II (neutral to basic; 56-70 kDa).</text>
</comment>
<comment type="similarity">
    <text evidence="2">Belongs to the intermediate filament family.</text>
</comment>
<dbReference type="EMBL" id="AJ564205">
    <property type="protein sequence ID" value="CAD91905.1"/>
    <property type="molecule type" value="mRNA"/>
</dbReference>
<dbReference type="EMBL" id="CH471152">
    <property type="protein sequence ID" value="EAW60677.1"/>
    <property type="molecule type" value="Genomic_DNA"/>
</dbReference>
<dbReference type="EMBL" id="BC132951">
    <property type="protein sequence ID" value="AAI32952.1"/>
    <property type="molecule type" value="mRNA"/>
</dbReference>
<dbReference type="EMBL" id="BC136896">
    <property type="protein sequence ID" value="AAI36897.1"/>
    <property type="molecule type" value="mRNA"/>
</dbReference>
<dbReference type="CCDS" id="CCDS11374.1"/>
<dbReference type="RefSeq" id="NP_853517.2">
    <property type="nucleotide sequence ID" value="NM_181539.5"/>
</dbReference>
<dbReference type="SMR" id="Q7Z3Y9"/>
<dbReference type="BioGRID" id="131677">
    <property type="interactions" value="34"/>
</dbReference>
<dbReference type="FunCoup" id="Q7Z3Y9">
    <property type="interactions" value="144"/>
</dbReference>
<dbReference type="IntAct" id="Q7Z3Y9">
    <property type="interactions" value="23"/>
</dbReference>
<dbReference type="STRING" id="9606.ENSP00000334798"/>
<dbReference type="iPTMnet" id="Q7Z3Y9"/>
<dbReference type="PhosphoSitePlus" id="Q7Z3Y9"/>
<dbReference type="SwissPalm" id="Q7Z3Y9"/>
<dbReference type="BioMuta" id="KRT26"/>
<dbReference type="DMDM" id="162416254"/>
<dbReference type="jPOST" id="Q7Z3Y9"/>
<dbReference type="MassIVE" id="Q7Z3Y9"/>
<dbReference type="PaxDb" id="9606-ENSP00000334798"/>
<dbReference type="PeptideAtlas" id="Q7Z3Y9"/>
<dbReference type="ProteomicsDB" id="69097"/>
<dbReference type="Antibodypedia" id="57607">
    <property type="antibodies" value="87 antibodies from 17 providers"/>
</dbReference>
<dbReference type="DNASU" id="353288"/>
<dbReference type="Ensembl" id="ENST00000335552.5">
    <property type="protein sequence ID" value="ENSP00000334798.4"/>
    <property type="gene ID" value="ENSG00000186393.6"/>
</dbReference>
<dbReference type="GeneID" id="353288"/>
<dbReference type="KEGG" id="hsa:353288"/>
<dbReference type="MANE-Select" id="ENST00000335552.5">
    <property type="protein sequence ID" value="ENSP00000334798.4"/>
    <property type="RefSeq nucleotide sequence ID" value="NM_181539.5"/>
    <property type="RefSeq protein sequence ID" value="NP_853517.2"/>
</dbReference>
<dbReference type="UCSC" id="uc002hvf.4">
    <property type="organism name" value="human"/>
</dbReference>
<dbReference type="AGR" id="HGNC:30840"/>
<dbReference type="CTD" id="353288"/>
<dbReference type="DisGeNET" id="353288"/>
<dbReference type="GeneCards" id="KRT26"/>
<dbReference type="HGNC" id="HGNC:30840">
    <property type="gene designation" value="KRT26"/>
</dbReference>
<dbReference type="HPA" id="ENSG00000186393">
    <property type="expression patterns" value="Tissue enriched (skin)"/>
</dbReference>
<dbReference type="MIM" id="616675">
    <property type="type" value="gene"/>
</dbReference>
<dbReference type="neXtProt" id="NX_Q7Z3Y9"/>
<dbReference type="OpenTargets" id="ENSG00000186393"/>
<dbReference type="PharmGKB" id="PA134863261"/>
<dbReference type="VEuPathDB" id="HostDB:ENSG00000186393"/>
<dbReference type="eggNOG" id="ENOG502SMDE">
    <property type="taxonomic scope" value="Eukaryota"/>
</dbReference>
<dbReference type="GeneTree" id="ENSGT00940000161950"/>
<dbReference type="HOGENOM" id="CLU_012560_8_3_1"/>
<dbReference type="InParanoid" id="Q7Z3Y9"/>
<dbReference type="OMA" id="IQCETLS"/>
<dbReference type="OrthoDB" id="9447587at2759"/>
<dbReference type="PAN-GO" id="Q7Z3Y9">
    <property type="GO annotations" value="1 GO annotation based on evolutionary models"/>
</dbReference>
<dbReference type="PhylomeDB" id="Q7Z3Y9"/>
<dbReference type="TreeFam" id="TF332742"/>
<dbReference type="PathwayCommons" id="Q7Z3Y9"/>
<dbReference type="Reactome" id="R-HSA-6805567">
    <property type="pathway name" value="Keratinization"/>
</dbReference>
<dbReference type="Reactome" id="R-HSA-6809371">
    <property type="pathway name" value="Formation of the cornified envelope"/>
</dbReference>
<dbReference type="SignaLink" id="Q7Z3Y9"/>
<dbReference type="BioGRID-ORCS" id="353288">
    <property type="hits" value="10 hits in 1130 CRISPR screens"/>
</dbReference>
<dbReference type="GenomeRNAi" id="353288"/>
<dbReference type="Pharos" id="Q7Z3Y9">
    <property type="development level" value="Tbio"/>
</dbReference>
<dbReference type="PRO" id="PR:Q7Z3Y9"/>
<dbReference type="Proteomes" id="UP000005640">
    <property type="component" value="Chromosome 17"/>
</dbReference>
<dbReference type="RNAct" id="Q7Z3Y9">
    <property type="molecule type" value="protein"/>
</dbReference>
<dbReference type="Bgee" id="ENSG00000186393">
    <property type="expression patterns" value="Expressed in male germ line stem cell (sensu Vertebrata) in testis and 7 other cell types or tissues"/>
</dbReference>
<dbReference type="GO" id="GO:0005856">
    <property type="term" value="C:cytoskeleton"/>
    <property type="evidence" value="ECO:0000318"/>
    <property type="project" value="GO_Central"/>
</dbReference>
<dbReference type="GO" id="GO:0005829">
    <property type="term" value="C:cytosol"/>
    <property type="evidence" value="ECO:0000304"/>
    <property type="project" value="Reactome"/>
</dbReference>
<dbReference type="GO" id="GO:0070062">
    <property type="term" value="C:extracellular exosome"/>
    <property type="evidence" value="ECO:0007005"/>
    <property type="project" value="UniProtKB"/>
</dbReference>
<dbReference type="GO" id="GO:0005882">
    <property type="term" value="C:intermediate filament"/>
    <property type="evidence" value="ECO:0007669"/>
    <property type="project" value="UniProtKB-KW"/>
</dbReference>
<dbReference type="GO" id="GO:0005198">
    <property type="term" value="F:structural molecule activity"/>
    <property type="evidence" value="ECO:0007669"/>
    <property type="project" value="InterPro"/>
</dbReference>
<dbReference type="GO" id="GO:0030855">
    <property type="term" value="P:epithelial cell differentiation"/>
    <property type="evidence" value="ECO:0000318"/>
    <property type="project" value="GO_Central"/>
</dbReference>
<dbReference type="GO" id="GO:0045109">
    <property type="term" value="P:intermediate filament organization"/>
    <property type="evidence" value="ECO:0000318"/>
    <property type="project" value="GO_Central"/>
</dbReference>
<dbReference type="FunFam" id="1.20.5.1160:FF:000002">
    <property type="entry name" value="Type I keratin 10"/>
    <property type="match status" value="1"/>
</dbReference>
<dbReference type="FunFam" id="1.20.5.170:FF:000002">
    <property type="entry name" value="Type I keratin KA11"/>
    <property type="match status" value="1"/>
</dbReference>
<dbReference type="FunFam" id="1.20.5.500:FF:000001">
    <property type="entry name" value="Type II keratin 23"/>
    <property type="match status" value="1"/>
</dbReference>
<dbReference type="Gene3D" id="1.20.5.170">
    <property type="match status" value="1"/>
</dbReference>
<dbReference type="Gene3D" id="1.20.5.500">
    <property type="entry name" value="Single helix bin"/>
    <property type="match status" value="1"/>
</dbReference>
<dbReference type="Gene3D" id="1.20.5.1160">
    <property type="entry name" value="Vasodilator-stimulated phosphoprotein"/>
    <property type="match status" value="1"/>
</dbReference>
<dbReference type="InterPro" id="IPR039008">
    <property type="entry name" value="IF_rod_dom"/>
</dbReference>
<dbReference type="InterPro" id="IPR002957">
    <property type="entry name" value="Keratin_I"/>
</dbReference>
<dbReference type="PANTHER" id="PTHR23239">
    <property type="entry name" value="INTERMEDIATE FILAMENT"/>
    <property type="match status" value="1"/>
</dbReference>
<dbReference type="PANTHER" id="PTHR23239:SF162">
    <property type="entry name" value="KERATIN, TYPE I CYTOSKELETAL 26"/>
    <property type="match status" value="1"/>
</dbReference>
<dbReference type="Pfam" id="PF00038">
    <property type="entry name" value="Filament"/>
    <property type="match status" value="1"/>
</dbReference>
<dbReference type="PRINTS" id="PR01248">
    <property type="entry name" value="TYPE1KERATIN"/>
</dbReference>
<dbReference type="SMART" id="SM01391">
    <property type="entry name" value="Filament"/>
    <property type="match status" value="1"/>
</dbReference>
<dbReference type="SUPFAM" id="SSF64593">
    <property type="entry name" value="Intermediate filament protein, coiled coil region"/>
    <property type="match status" value="2"/>
</dbReference>
<dbReference type="PROSITE" id="PS51842">
    <property type="entry name" value="IF_ROD_2"/>
    <property type="match status" value="1"/>
</dbReference>
<name>K1C26_HUMAN</name>
<gene>
    <name evidence="6" type="primary">KRT26</name>
    <name evidence="7" type="synonym">KRT25B</name>
</gene>